<accession>C4Y3K5</accession>
<proteinExistence type="inferred from homology"/>
<feature type="chain" id="PRO_0000413400" description="Glutamyl-tRNA(Gln) amidotransferase subunit F, mitochondrial">
    <location>
        <begin position="1"/>
        <end position="165"/>
    </location>
</feature>
<feature type="region of interest" description="Disordered" evidence="2">
    <location>
        <begin position="137"/>
        <end position="165"/>
    </location>
</feature>
<feature type="compositionally biased region" description="Basic and acidic residues" evidence="2">
    <location>
        <begin position="137"/>
        <end position="153"/>
    </location>
</feature>
<comment type="function">
    <text evidence="1">Allows the formation of correctly charged Gln-tRNA(Gln) through the transamidation of misacylated Glu-tRNA(Gln) in the mitochondria. The reaction takes place in the presence of glutamine and ATP through an activated gamma-phospho-Glu-tRNA(Gln). Required for proper protein synthesis within the mitochondrion.</text>
</comment>
<comment type="catalytic activity">
    <reaction evidence="1">
        <text>L-glutamyl-tRNA(Gln) + L-glutamine + ATP + H2O = L-glutaminyl-tRNA(Gln) + L-glutamate + ADP + phosphate + H(+)</text>
        <dbReference type="Rhea" id="RHEA:17521"/>
        <dbReference type="Rhea" id="RHEA-COMP:9681"/>
        <dbReference type="Rhea" id="RHEA-COMP:9684"/>
        <dbReference type="ChEBI" id="CHEBI:15377"/>
        <dbReference type="ChEBI" id="CHEBI:15378"/>
        <dbReference type="ChEBI" id="CHEBI:29985"/>
        <dbReference type="ChEBI" id="CHEBI:30616"/>
        <dbReference type="ChEBI" id="CHEBI:43474"/>
        <dbReference type="ChEBI" id="CHEBI:58359"/>
        <dbReference type="ChEBI" id="CHEBI:78520"/>
        <dbReference type="ChEBI" id="CHEBI:78521"/>
        <dbReference type="ChEBI" id="CHEBI:456216"/>
    </reaction>
</comment>
<comment type="subunit">
    <text evidence="1">Subunit of the heterotrimeric GatFAB amidotransferase (AdT) complex, composed of A, B and F subunits.</text>
</comment>
<comment type="subcellular location">
    <subcellularLocation>
        <location evidence="1">Mitochondrion inner membrane</location>
        <topology evidence="1">Peripheral membrane protein</topology>
        <orientation evidence="1">Matrix side</orientation>
    </subcellularLocation>
</comment>
<comment type="miscellaneous">
    <text evidence="1">This protein may be expected to contain an N-terminal transit peptide but none has been predicted.</text>
</comment>
<comment type="similarity">
    <text evidence="1">Belongs to the GatF family.</text>
</comment>
<keyword id="KW-0067">ATP-binding</keyword>
<keyword id="KW-0436">Ligase</keyword>
<keyword id="KW-0472">Membrane</keyword>
<keyword id="KW-0496">Mitochondrion</keyword>
<keyword id="KW-0999">Mitochondrion inner membrane</keyword>
<keyword id="KW-0547">Nucleotide-binding</keyword>
<keyword id="KW-0648">Protein biosynthesis</keyword>
<keyword id="KW-1185">Reference proteome</keyword>
<sequence>MFLRQFSTSPALLKGKVLPELKNAQEISQFLRKSTWNVHDLIPSKEHITNEVDSRVVRKMLRLSGLDENLPEPELNRWAEMLNTHVAFINHVSDLHSSTKGEIGSSVFRLLASDHKPESPLTLKELLRQVDEISDHVSDQRGERGFDTSELRTRINRAKSTAEKE</sequence>
<protein>
    <recommendedName>
        <fullName evidence="1">Glutamyl-tRNA(Gln) amidotransferase subunit F, mitochondrial</fullName>
        <shortName evidence="1">Glu-AdT subunit F</shortName>
        <ecNumber evidence="1">6.3.5.-</ecNumber>
    </recommendedName>
</protein>
<evidence type="ECO:0000255" key="1">
    <source>
        <dbReference type="HAMAP-Rule" id="MF_03151"/>
    </source>
</evidence>
<evidence type="ECO:0000256" key="2">
    <source>
        <dbReference type="SAM" id="MobiDB-lite"/>
    </source>
</evidence>
<dbReference type="EC" id="6.3.5.-" evidence="1"/>
<dbReference type="EMBL" id="CH408078">
    <property type="protein sequence ID" value="EEQ38992.1"/>
    <property type="molecule type" value="Genomic_DNA"/>
</dbReference>
<dbReference type="RefSeq" id="XP_002617674.1">
    <property type="nucleotide sequence ID" value="XM_002617628.1"/>
</dbReference>
<dbReference type="SMR" id="C4Y3K5"/>
<dbReference type="STRING" id="306902.C4Y3K5"/>
<dbReference type="GeneID" id="8497597"/>
<dbReference type="KEGG" id="clu:CLUG_03118"/>
<dbReference type="VEuPathDB" id="FungiDB:CLUG_03118"/>
<dbReference type="HOGENOM" id="CLU_127195_0_0_1"/>
<dbReference type="InParanoid" id="C4Y3K5"/>
<dbReference type="OMA" id="STWSINE"/>
<dbReference type="OrthoDB" id="54777at4891"/>
<dbReference type="Proteomes" id="UP000007703">
    <property type="component" value="Unassembled WGS sequence"/>
</dbReference>
<dbReference type="GO" id="GO:0030956">
    <property type="term" value="C:glutamyl-tRNA(Gln) amidotransferase complex"/>
    <property type="evidence" value="ECO:0007669"/>
    <property type="project" value="UniProtKB-UniRule"/>
</dbReference>
<dbReference type="GO" id="GO:0005743">
    <property type="term" value="C:mitochondrial inner membrane"/>
    <property type="evidence" value="ECO:0007669"/>
    <property type="project" value="UniProtKB-SubCell"/>
</dbReference>
<dbReference type="GO" id="GO:0005524">
    <property type="term" value="F:ATP binding"/>
    <property type="evidence" value="ECO:0007669"/>
    <property type="project" value="UniProtKB-KW"/>
</dbReference>
<dbReference type="GO" id="GO:0050567">
    <property type="term" value="F:glutaminyl-tRNA synthase (glutamine-hydrolyzing) activity"/>
    <property type="evidence" value="ECO:0007669"/>
    <property type="project" value="UniProtKB-UniRule"/>
</dbReference>
<dbReference type="GO" id="GO:0070681">
    <property type="term" value="P:glutaminyl-tRNAGln biosynthesis via transamidation"/>
    <property type="evidence" value="ECO:0007669"/>
    <property type="project" value="UniProtKB-UniRule"/>
</dbReference>
<dbReference type="GO" id="GO:0032543">
    <property type="term" value="P:mitochondrial translation"/>
    <property type="evidence" value="ECO:0007669"/>
    <property type="project" value="UniProtKB-UniRule"/>
</dbReference>
<dbReference type="CDD" id="cd21422">
    <property type="entry name" value="GatF"/>
    <property type="match status" value="1"/>
</dbReference>
<dbReference type="HAMAP" id="MF_03151">
    <property type="entry name" value="GatF"/>
    <property type="match status" value="1"/>
</dbReference>
<dbReference type="InterPro" id="IPR027499">
    <property type="entry name" value="GatF"/>
</dbReference>
<dbReference type="Pfam" id="PF20977">
    <property type="entry name" value="GatF"/>
    <property type="match status" value="1"/>
</dbReference>
<name>GATF_CLAL4</name>
<organism>
    <name type="scientific">Clavispora lusitaniae (strain ATCC 42720)</name>
    <name type="common">Yeast</name>
    <name type="synonym">Candida lusitaniae</name>
    <dbReference type="NCBI Taxonomy" id="306902"/>
    <lineage>
        <taxon>Eukaryota</taxon>
        <taxon>Fungi</taxon>
        <taxon>Dikarya</taxon>
        <taxon>Ascomycota</taxon>
        <taxon>Saccharomycotina</taxon>
        <taxon>Pichiomycetes</taxon>
        <taxon>Metschnikowiaceae</taxon>
        <taxon>Clavispora</taxon>
    </lineage>
</organism>
<reference key="1">
    <citation type="journal article" date="2009" name="Nature">
        <title>Evolution of pathogenicity and sexual reproduction in eight Candida genomes.</title>
        <authorList>
            <person name="Butler G."/>
            <person name="Rasmussen M.D."/>
            <person name="Lin M.F."/>
            <person name="Santos M.A.S."/>
            <person name="Sakthikumar S."/>
            <person name="Munro C.A."/>
            <person name="Rheinbay E."/>
            <person name="Grabherr M."/>
            <person name="Forche A."/>
            <person name="Reedy J.L."/>
            <person name="Agrafioti I."/>
            <person name="Arnaud M.B."/>
            <person name="Bates S."/>
            <person name="Brown A.J.P."/>
            <person name="Brunke S."/>
            <person name="Costanzo M.C."/>
            <person name="Fitzpatrick D.A."/>
            <person name="de Groot P.W.J."/>
            <person name="Harris D."/>
            <person name="Hoyer L.L."/>
            <person name="Hube B."/>
            <person name="Klis F.M."/>
            <person name="Kodira C."/>
            <person name="Lennard N."/>
            <person name="Logue M.E."/>
            <person name="Martin R."/>
            <person name="Neiman A.M."/>
            <person name="Nikolaou E."/>
            <person name="Quail M.A."/>
            <person name="Quinn J."/>
            <person name="Santos M.C."/>
            <person name="Schmitzberger F.F."/>
            <person name="Sherlock G."/>
            <person name="Shah P."/>
            <person name="Silverstein K.A.T."/>
            <person name="Skrzypek M.S."/>
            <person name="Soll D."/>
            <person name="Staggs R."/>
            <person name="Stansfield I."/>
            <person name="Stumpf M.P.H."/>
            <person name="Sudbery P.E."/>
            <person name="Srikantha T."/>
            <person name="Zeng Q."/>
            <person name="Berman J."/>
            <person name="Berriman M."/>
            <person name="Heitman J."/>
            <person name="Gow N.A.R."/>
            <person name="Lorenz M.C."/>
            <person name="Birren B.W."/>
            <person name="Kellis M."/>
            <person name="Cuomo C.A."/>
        </authorList>
    </citation>
    <scope>NUCLEOTIDE SEQUENCE [LARGE SCALE GENOMIC DNA]</scope>
    <source>
        <strain>ATCC 42720</strain>
    </source>
</reference>
<gene>
    <name evidence="1" type="primary">GTF1</name>
    <name type="ORF">CLUG_03118</name>
</gene>